<dbReference type="EC" id="7.1.1.-" evidence="1"/>
<dbReference type="EMBL" id="CP001638">
    <property type="protein sequence ID" value="ACS25931.1"/>
    <property type="molecule type" value="Genomic_DNA"/>
</dbReference>
<dbReference type="SMR" id="C5D978"/>
<dbReference type="STRING" id="471223.GWCH70_3291"/>
<dbReference type="KEGG" id="gwc:GWCH70_3291"/>
<dbReference type="eggNOG" id="COG1007">
    <property type="taxonomic scope" value="Bacteria"/>
</dbReference>
<dbReference type="HOGENOM" id="CLU_007100_1_1_9"/>
<dbReference type="OrthoDB" id="9811718at2"/>
<dbReference type="GO" id="GO:0005886">
    <property type="term" value="C:plasma membrane"/>
    <property type="evidence" value="ECO:0007669"/>
    <property type="project" value="UniProtKB-SubCell"/>
</dbReference>
<dbReference type="GO" id="GO:0008137">
    <property type="term" value="F:NADH dehydrogenase (ubiquinone) activity"/>
    <property type="evidence" value="ECO:0007669"/>
    <property type="project" value="InterPro"/>
</dbReference>
<dbReference type="GO" id="GO:0050136">
    <property type="term" value="F:NADH:ubiquinone reductase (non-electrogenic) activity"/>
    <property type="evidence" value="ECO:0007669"/>
    <property type="project" value="UniProtKB-UniRule"/>
</dbReference>
<dbReference type="GO" id="GO:0048038">
    <property type="term" value="F:quinone binding"/>
    <property type="evidence" value="ECO:0007669"/>
    <property type="project" value="UniProtKB-KW"/>
</dbReference>
<dbReference type="GO" id="GO:0042773">
    <property type="term" value="P:ATP synthesis coupled electron transport"/>
    <property type="evidence" value="ECO:0007669"/>
    <property type="project" value="InterPro"/>
</dbReference>
<dbReference type="HAMAP" id="MF_00445">
    <property type="entry name" value="NDH1_NuoN_1"/>
    <property type="match status" value="1"/>
</dbReference>
<dbReference type="InterPro" id="IPR010096">
    <property type="entry name" value="NADH-Q_OxRdtase_suN/2"/>
</dbReference>
<dbReference type="InterPro" id="IPR001750">
    <property type="entry name" value="ND/Mrp_TM"/>
</dbReference>
<dbReference type="NCBIfam" id="TIGR01770">
    <property type="entry name" value="NDH_I_N"/>
    <property type="match status" value="1"/>
</dbReference>
<dbReference type="NCBIfam" id="NF004446">
    <property type="entry name" value="PRK05777.2-4"/>
    <property type="match status" value="1"/>
</dbReference>
<dbReference type="PANTHER" id="PTHR22773">
    <property type="entry name" value="NADH DEHYDROGENASE"/>
    <property type="match status" value="1"/>
</dbReference>
<dbReference type="Pfam" id="PF00361">
    <property type="entry name" value="Proton_antipo_M"/>
    <property type="match status" value="1"/>
</dbReference>
<proteinExistence type="inferred from homology"/>
<gene>
    <name evidence="1" type="primary">nuoN</name>
    <name type="ordered locus">GWCH70_3291</name>
</gene>
<name>NUON_GEOSW</name>
<feature type="chain" id="PRO_0000391151" description="NADH-quinone oxidoreductase subunit N">
    <location>
        <begin position="1"/>
        <end position="492"/>
    </location>
</feature>
<feature type="transmembrane region" description="Helical" evidence="1">
    <location>
        <begin position="13"/>
        <end position="33"/>
    </location>
</feature>
<feature type="transmembrane region" description="Helical" evidence="1">
    <location>
        <begin position="42"/>
        <end position="62"/>
    </location>
</feature>
<feature type="transmembrane region" description="Helical" evidence="1">
    <location>
        <begin position="79"/>
        <end position="99"/>
    </location>
</feature>
<feature type="transmembrane region" description="Helical" evidence="1">
    <location>
        <begin position="111"/>
        <end position="131"/>
    </location>
</feature>
<feature type="transmembrane region" description="Helical" evidence="1">
    <location>
        <begin position="133"/>
        <end position="153"/>
    </location>
</feature>
<feature type="transmembrane region" description="Helical" evidence="1">
    <location>
        <begin position="168"/>
        <end position="188"/>
    </location>
</feature>
<feature type="transmembrane region" description="Helical" evidence="1">
    <location>
        <begin position="211"/>
        <end position="231"/>
    </location>
</feature>
<feature type="transmembrane region" description="Helical" evidence="1">
    <location>
        <begin position="251"/>
        <end position="271"/>
    </location>
</feature>
<feature type="transmembrane region" description="Helical" evidence="1">
    <location>
        <begin position="284"/>
        <end position="304"/>
    </location>
</feature>
<feature type="transmembrane region" description="Helical" evidence="1">
    <location>
        <begin position="318"/>
        <end position="340"/>
    </location>
</feature>
<feature type="transmembrane region" description="Helical" evidence="1">
    <location>
        <begin position="344"/>
        <end position="366"/>
    </location>
</feature>
<feature type="transmembrane region" description="Helical" evidence="1">
    <location>
        <begin position="388"/>
        <end position="408"/>
    </location>
</feature>
<feature type="transmembrane region" description="Helical" evidence="1">
    <location>
        <begin position="426"/>
        <end position="446"/>
    </location>
</feature>
<feature type="transmembrane region" description="Helical" evidence="1">
    <location>
        <begin position="463"/>
        <end position="483"/>
    </location>
</feature>
<sequence length="492" mass="53709">MSMHTLLQYKWEMMTPEFIVLGTALILSLMDLFMPDDKDRRPLAWIAFVGVAIALIATIGLIPAKAVSILNDTFRLDAFGKAFKLLLLAGGALSLLLAFDYRPKEGLKDRGEFYYLLLCALLGAMIMASSGDLITLFVGLELLSISSYILAGIRKTSMQANESAMKYVINGGISTAITLFGMSYIFGLTGTTNIKEIALEVQKLTDSGYQYILAIAFLMMLVGLSFKISSVPFHMWTPDVYQGAPTPVTAFLSVVSKTAGFVIVLRLFITIFTQAPAQGKDPSSLLFSMQDYIAFLAGATMIIGNTIALKQRSMKRLFAYSSIAHAGYILVGFAAMSWVMIDSIWFYLLAYLFMNLGAFAILQRISDEADSDDLSHFAGLYQRNPLLAVAMGIFLLSLAGIPGTAGFIGKLNIFLGALMTEPGHYVLAAVMIATTVVSYVYYFGIFVQIFFRPADETTSLRMPIGLAMVVVLCALGTLLFGVVPGLAYHFLE</sequence>
<evidence type="ECO:0000255" key="1">
    <source>
        <dbReference type="HAMAP-Rule" id="MF_00445"/>
    </source>
</evidence>
<reference key="1">
    <citation type="submission" date="2009-06" db="EMBL/GenBank/DDBJ databases">
        <title>Complete sequence of chromosome of Geopacillus sp. WCH70.</title>
        <authorList>
            <consortium name="US DOE Joint Genome Institute"/>
            <person name="Lucas S."/>
            <person name="Copeland A."/>
            <person name="Lapidus A."/>
            <person name="Glavina del Rio T."/>
            <person name="Dalin E."/>
            <person name="Tice H."/>
            <person name="Bruce D."/>
            <person name="Goodwin L."/>
            <person name="Pitluck S."/>
            <person name="Chertkov O."/>
            <person name="Brettin T."/>
            <person name="Detter J.C."/>
            <person name="Han C."/>
            <person name="Larimer F."/>
            <person name="Land M."/>
            <person name="Hauser L."/>
            <person name="Kyrpides N."/>
            <person name="Mikhailova N."/>
            <person name="Brumm P."/>
            <person name="Mead D.A."/>
            <person name="Richardson P."/>
        </authorList>
    </citation>
    <scope>NUCLEOTIDE SEQUENCE [LARGE SCALE GENOMIC DNA]</scope>
    <source>
        <strain>WCH70</strain>
    </source>
</reference>
<comment type="function">
    <text evidence="1">NDH-1 shuttles electrons from NADH, via FMN and iron-sulfur (Fe-S) centers, to quinones in the respiratory chain. The immediate electron acceptor for the enzyme in this species is believed to be a menaquinone. Couples the redox reaction to proton translocation (for every two electrons transferred, four hydrogen ions are translocated across the cytoplasmic membrane), and thus conserves the redox energy in a proton gradient.</text>
</comment>
<comment type="catalytic activity">
    <reaction evidence="1">
        <text>a quinone + NADH + 5 H(+)(in) = a quinol + NAD(+) + 4 H(+)(out)</text>
        <dbReference type="Rhea" id="RHEA:57888"/>
        <dbReference type="ChEBI" id="CHEBI:15378"/>
        <dbReference type="ChEBI" id="CHEBI:24646"/>
        <dbReference type="ChEBI" id="CHEBI:57540"/>
        <dbReference type="ChEBI" id="CHEBI:57945"/>
        <dbReference type="ChEBI" id="CHEBI:132124"/>
    </reaction>
</comment>
<comment type="subunit">
    <text evidence="1">NDH-1 is composed of 14 different subunits. Subunits NuoA, H, J, K, L, M, N constitute the membrane sector of the complex.</text>
</comment>
<comment type="subcellular location">
    <subcellularLocation>
        <location evidence="1">Cell membrane</location>
        <topology evidence="1">Multi-pass membrane protein</topology>
    </subcellularLocation>
</comment>
<comment type="similarity">
    <text evidence="1">Belongs to the complex I subunit 2 family.</text>
</comment>
<protein>
    <recommendedName>
        <fullName evidence="1">NADH-quinone oxidoreductase subunit N</fullName>
        <ecNumber evidence="1">7.1.1.-</ecNumber>
    </recommendedName>
    <alternativeName>
        <fullName evidence="1">NADH dehydrogenase I subunit N</fullName>
    </alternativeName>
    <alternativeName>
        <fullName evidence="1">NDH-1 subunit N</fullName>
    </alternativeName>
</protein>
<accession>C5D978</accession>
<keyword id="KW-1003">Cell membrane</keyword>
<keyword id="KW-0472">Membrane</keyword>
<keyword id="KW-0520">NAD</keyword>
<keyword id="KW-0874">Quinone</keyword>
<keyword id="KW-1278">Translocase</keyword>
<keyword id="KW-0812">Transmembrane</keyword>
<keyword id="KW-1133">Transmembrane helix</keyword>
<keyword id="KW-0813">Transport</keyword>
<organism>
    <name type="scientific">Geobacillus sp. (strain WCH70)</name>
    <dbReference type="NCBI Taxonomy" id="471223"/>
    <lineage>
        <taxon>Bacteria</taxon>
        <taxon>Bacillati</taxon>
        <taxon>Bacillota</taxon>
        <taxon>Bacilli</taxon>
        <taxon>Bacillales</taxon>
        <taxon>Anoxybacillaceae</taxon>
        <taxon>Geobacillus</taxon>
    </lineage>
</organism>